<accession>B8D849</accession>
<protein>
    <recommendedName>
        <fullName evidence="1">Large ribosomal subunit protein uL3</fullName>
    </recommendedName>
    <alternativeName>
        <fullName evidence="2">50S ribosomal protein L3</fullName>
    </alternativeName>
</protein>
<sequence>MIGLVGKKIGMTRIFTEEGTSIPVTVIELKENRITQVKNINTDLYCAIQVTTGIKKSNRLNKPQSGHFLKSGVTPGRGLWEFRTDKNNNFKIGQSITINIFNNVKKVDITGISKGKGFSGTVKRWNFHTQDATHGNSLSHRVPGSIGQNQTPGRVFKGKKMAGQLGNTRVTVQSLNIVRIDERRNLLLVKGAVPGATGSDLIVKPAIKV</sequence>
<organism>
    <name type="scientific">Buchnera aphidicola subsp. Acyrthosiphon pisum (strain Tuc7)</name>
    <dbReference type="NCBI Taxonomy" id="561501"/>
    <lineage>
        <taxon>Bacteria</taxon>
        <taxon>Pseudomonadati</taxon>
        <taxon>Pseudomonadota</taxon>
        <taxon>Gammaproteobacteria</taxon>
        <taxon>Enterobacterales</taxon>
        <taxon>Erwiniaceae</taxon>
        <taxon>Buchnera</taxon>
    </lineage>
</organism>
<comment type="function">
    <text evidence="1">One of the primary rRNA binding proteins, it binds directly near the 3'-end of the 23S rRNA, where it nucleates assembly of the 50S subunit.</text>
</comment>
<comment type="subunit">
    <text evidence="1">Part of the 50S ribosomal subunit. Forms a cluster with proteins L14 and L19.</text>
</comment>
<comment type="PTM">
    <text evidence="1">Methylated by PrmB.</text>
</comment>
<comment type="similarity">
    <text evidence="1">Belongs to the universal ribosomal protein uL3 family.</text>
</comment>
<proteinExistence type="inferred from homology"/>
<gene>
    <name evidence="1" type="primary">rplC</name>
    <name type="ordered locus">BUAPTUC7_518</name>
</gene>
<feature type="chain" id="PRO_1000165874" description="Large ribosomal subunit protein uL3">
    <location>
        <begin position="1"/>
        <end position="209"/>
    </location>
</feature>
<feature type="modified residue" description="N5-methylglutamine" evidence="1">
    <location>
        <position position="150"/>
    </location>
</feature>
<evidence type="ECO:0000255" key="1">
    <source>
        <dbReference type="HAMAP-Rule" id="MF_01325"/>
    </source>
</evidence>
<evidence type="ECO:0000305" key="2"/>
<dbReference type="EMBL" id="CP001158">
    <property type="protein sequence ID" value="ACL30314.1"/>
    <property type="molecule type" value="Genomic_DNA"/>
</dbReference>
<dbReference type="RefSeq" id="WP_009874475.1">
    <property type="nucleotide sequence ID" value="NC_011834.1"/>
</dbReference>
<dbReference type="SMR" id="B8D849"/>
<dbReference type="KEGG" id="bau:BUAPTUC7_518"/>
<dbReference type="HOGENOM" id="CLU_044142_4_1_6"/>
<dbReference type="GO" id="GO:0022625">
    <property type="term" value="C:cytosolic large ribosomal subunit"/>
    <property type="evidence" value="ECO:0007669"/>
    <property type="project" value="TreeGrafter"/>
</dbReference>
<dbReference type="GO" id="GO:0019843">
    <property type="term" value="F:rRNA binding"/>
    <property type="evidence" value="ECO:0007669"/>
    <property type="project" value="UniProtKB-UniRule"/>
</dbReference>
<dbReference type="GO" id="GO:0003735">
    <property type="term" value="F:structural constituent of ribosome"/>
    <property type="evidence" value="ECO:0007669"/>
    <property type="project" value="InterPro"/>
</dbReference>
<dbReference type="GO" id="GO:0006412">
    <property type="term" value="P:translation"/>
    <property type="evidence" value="ECO:0007669"/>
    <property type="project" value="UniProtKB-UniRule"/>
</dbReference>
<dbReference type="FunFam" id="2.40.30.10:FF:000004">
    <property type="entry name" value="50S ribosomal protein L3"/>
    <property type="match status" value="1"/>
</dbReference>
<dbReference type="FunFam" id="3.30.160.810:FF:000001">
    <property type="entry name" value="50S ribosomal protein L3"/>
    <property type="match status" value="1"/>
</dbReference>
<dbReference type="Gene3D" id="3.30.160.810">
    <property type="match status" value="1"/>
</dbReference>
<dbReference type="Gene3D" id="2.40.30.10">
    <property type="entry name" value="Translation factors"/>
    <property type="match status" value="1"/>
</dbReference>
<dbReference type="HAMAP" id="MF_01325_B">
    <property type="entry name" value="Ribosomal_uL3_B"/>
    <property type="match status" value="1"/>
</dbReference>
<dbReference type="InterPro" id="IPR000597">
    <property type="entry name" value="Ribosomal_uL3"/>
</dbReference>
<dbReference type="InterPro" id="IPR019927">
    <property type="entry name" value="Ribosomal_uL3_bac/org-type"/>
</dbReference>
<dbReference type="InterPro" id="IPR019926">
    <property type="entry name" value="Ribosomal_uL3_CS"/>
</dbReference>
<dbReference type="InterPro" id="IPR009000">
    <property type="entry name" value="Transl_B-barrel_sf"/>
</dbReference>
<dbReference type="NCBIfam" id="TIGR03625">
    <property type="entry name" value="L3_bact"/>
    <property type="match status" value="1"/>
</dbReference>
<dbReference type="PANTHER" id="PTHR11229">
    <property type="entry name" value="50S RIBOSOMAL PROTEIN L3"/>
    <property type="match status" value="1"/>
</dbReference>
<dbReference type="PANTHER" id="PTHR11229:SF16">
    <property type="entry name" value="LARGE RIBOSOMAL SUBUNIT PROTEIN UL3C"/>
    <property type="match status" value="1"/>
</dbReference>
<dbReference type="Pfam" id="PF00297">
    <property type="entry name" value="Ribosomal_L3"/>
    <property type="match status" value="1"/>
</dbReference>
<dbReference type="SUPFAM" id="SSF50447">
    <property type="entry name" value="Translation proteins"/>
    <property type="match status" value="1"/>
</dbReference>
<dbReference type="PROSITE" id="PS00474">
    <property type="entry name" value="RIBOSOMAL_L3"/>
    <property type="match status" value="1"/>
</dbReference>
<name>RL3_BUCAT</name>
<keyword id="KW-0488">Methylation</keyword>
<keyword id="KW-0687">Ribonucleoprotein</keyword>
<keyword id="KW-0689">Ribosomal protein</keyword>
<keyword id="KW-0694">RNA-binding</keyword>
<keyword id="KW-0699">rRNA-binding</keyword>
<reference key="1">
    <citation type="journal article" date="2009" name="Science">
        <title>The dynamics and time scale of ongoing genomic erosion in symbiotic bacteria.</title>
        <authorList>
            <person name="Moran N.A."/>
            <person name="McLaughlin H.J."/>
            <person name="Sorek R."/>
        </authorList>
    </citation>
    <scope>NUCLEOTIDE SEQUENCE [LARGE SCALE GENOMIC DNA]</scope>
    <source>
        <strain>Tuc7</strain>
    </source>
</reference>